<evidence type="ECO:0000269" key="1">
    <source>
    </source>
</evidence>
<evidence type="ECO:0000269" key="2">
    <source>
    </source>
</evidence>
<evidence type="ECO:0000269" key="3">
    <source>
    </source>
</evidence>
<evidence type="ECO:0000269" key="4">
    <source>
    </source>
</evidence>
<evidence type="ECO:0000269" key="5">
    <source>
    </source>
</evidence>
<evidence type="ECO:0000269" key="6">
    <source>
    </source>
</evidence>
<evidence type="ECO:0000269" key="7">
    <source>
    </source>
</evidence>
<evidence type="ECO:0000269" key="8">
    <source>
    </source>
</evidence>
<evidence type="ECO:0000269" key="9">
    <source>
    </source>
</evidence>
<evidence type="ECO:0000269" key="10">
    <source>
    </source>
</evidence>
<evidence type="ECO:0000269" key="11">
    <source>
    </source>
</evidence>
<evidence type="ECO:0000269" key="12">
    <source>
    </source>
</evidence>
<evidence type="ECO:0000269" key="13">
    <source>
    </source>
</evidence>
<evidence type="ECO:0000269" key="14">
    <source>
    </source>
</evidence>
<evidence type="ECO:0000303" key="15">
    <source>
    </source>
</evidence>
<evidence type="ECO:0000305" key="16"/>
<evidence type="ECO:0000305" key="17">
    <source>
    </source>
</evidence>
<evidence type="ECO:0000305" key="18">
    <source>
    </source>
</evidence>
<evidence type="ECO:0000305" key="19">
    <source>
    </source>
</evidence>
<evidence type="ECO:0000305" key="20">
    <source>
    </source>
</evidence>
<evidence type="ECO:0007744" key="21">
    <source>
        <dbReference type="PDB" id="4A8J"/>
    </source>
</evidence>
<evidence type="ECO:0007744" key="22">
    <source>
        <dbReference type="PDB" id="4EJS"/>
    </source>
</evidence>
<evidence type="ECO:0007829" key="23">
    <source>
        <dbReference type="PDB" id="4A8J"/>
    </source>
</evidence>
<protein>
    <recommendedName>
        <fullName>Elongator complex protein 6</fullName>
    </recommendedName>
    <alternativeName>
        <fullName>Gamma-toxin target 6</fullName>
    </alternativeName>
    <alternativeName>
        <fullName>HAT-associated protein 3</fullName>
    </alternativeName>
</protein>
<comment type="function">
    <text evidence="2 6 7 9 15">Component of the elongator complex which is required for multiple tRNA modifications, including mcm5U (5-methoxycarbonylmethyl uridine), mcm5s2U (5-methoxycarbonylmethyl-2-thiouridine), and ncm5U (5-carbamoylmethyl uridine) (PubMed:15769872, PubMed:18755837). The elongator complex catalyzes formation of carboxymethyluridine in the wobble base at position 34 in tRNAs (PubMed:29332244). It functions as a gamma-toxin target (TOT); disruption of the complex confers resistance to Kluyveromyces lactis toxin zymocin (pGKL1 killer toxin) (PubMed:11296232). May also be involved in sensitivity to Pichia inositovora toxin (PubMed:13680368).</text>
</comment>
<comment type="pathway">
    <text evidence="7 9">tRNA modification; 5-methoxycarbonylmethyl-2-thiouridine-tRNA biosynthesis.</text>
</comment>
<comment type="subunit">
    <text evidence="3 4 5 10 11 12 13 14">Component of the elongator complex which consists of ELP1/IKI3, ELP2, ELP3, ELP4, ELP5/IKI1 and ELP6 (PubMed:11390369, PubMed:11435442, PubMed:11689709, PubMed:27872205, PubMed:27974378). The elongator complex is composed of two copies of the Elp123 subcomplex (composed of ELP1/IKI3, ELP2 and ELP3) and two copies of the Elp456 subcomplex (composed of ELP4, ELP5/IKI1 and ELP6) (PubMed:27872205, PubMed:27974378). The Elp123 subcomplex forms a two-lobed scaffold, which binds the Elp456 subcomplex asymmetrically (PubMed:27872205, PubMed:27974378). In each lobe, ELP2 is tightly sandwiched between ELP1/IKI3 and ELP3 (PubMed:31309145). The Elp123 subcomplex binds tRNA through ELP1/IKI3 and ELP3 and can bind 2 tRNAs simultaneously (PubMed:31309145). tRNA-binding by the Elp123 subcomplex induces conformational rearrangements which precisely position the targeted anticodon base in the active site (PubMed:31309145). The Elp456 subcomplex binds tRNA and has ATPase activity (PubMed:22343726, PubMed:22556426).</text>
</comment>
<comment type="interaction">
    <interactant intactId="EBI-27653">
        <id>Q04868</id>
    </interactant>
    <interactant intactId="EBI-23459">
        <id>P42935</id>
        <label>ELP2</label>
    </interactant>
    <organismsDiffer>false</organismsDiffer>
    <experiments>3</experiments>
</comment>
<comment type="interaction">
    <interactant intactId="EBI-27653">
        <id>Q04868</id>
    </interactant>
    <interactant intactId="EBI-33957">
        <id>Q02908</id>
        <label>ELP3</label>
    </interactant>
    <organismsDiffer>false</organismsDiffer>
    <experiments>5</experiments>
</comment>
<comment type="interaction">
    <interactant intactId="EBI-27653">
        <id>Q04868</id>
    </interactant>
    <interactant intactId="EBI-35277">
        <id>Q02884</id>
        <label>ELP4</label>
    </interactant>
    <organismsDiffer>false</organismsDiffer>
    <experiments>15</experiments>
</comment>
<comment type="interaction">
    <interactant intactId="EBI-27653">
        <id>Q04868</id>
    </interactant>
    <interactant intactId="EBI-27653">
        <id>Q04868</id>
        <label>ELP6</label>
    </interactant>
    <organismsDiffer>false</organismsDiffer>
    <experiments>2</experiments>
</comment>
<comment type="interaction">
    <interactant intactId="EBI-27653">
        <id>Q04868</id>
    </interactant>
    <interactant intactId="EBI-9061">
        <id>P38874</id>
        <label>IKI1</label>
    </interactant>
    <organismsDiffer>false</organismsDiffer>
    <experiments>8</experiments>
</comment>
<comment type="interaction">
    <interactant intactId="EBI-27653">
        <id>Q04868</id>
    </interactant>
    <interactant intactId="EBI-9068">
        <id>Q06706</id>
        <label>IKI3</label>
    </interactant>
    <organismsDiffer>false</organismsDiffer>
    <experiments>8</experiments>
</comment>
<comment type="subcellular location">
    <subcellularLocation>
        <location evidence="8">Cytoplasm</location>
    </subcellularLocation>
    <subcellularLocation>
        <location evidence="1">Nucleus</location>
    </subcellularLocation>
</comment>
<comment type="similarity">
    <text evidence="16">Belongs to the ELP6 family.</text>
</comment>
<comment type="caution">
    <text evidence="17 18 19 20">The elongator complex was originally thought to play a role in transcription elongation. However, it is no longer thought to play a direct role in this process and its primary function is thought to be in tRNA modification.</text>
</comment>
<gene>
    <name type="primary">ELP6</name>
    <name type="synonym">HAP3</name>
    <name type="synonym">TOT6</name>
    <name type="ordered locus">YMR312W</name>
    <name type="ORF">YM9924.04</name>
</gene>
<proteinExistence type="evidence at protein level"/>
<feature type="chain" id="PRO_0000203355" description="Elongator complex protein 6">
    <location>
        <begin position="1"/>
        <end position="273"/>
    </location>
</feature>
<feature type="helix" evidence="23">
    <location>
        <begin position="20"/>
        <end position="23"/>
    </location>
</feature>
<feature type="strand" evidence="23">
    <location>
        <begin position="25"/>
        <end position="27"/>
    </location>
</feature>
<feature type="strand" evidence="23">
    <location>
        <begin position="30"/>
        <end position="36"/>
    </location>
</feature>
<feature type="helix" evidence="23">
    <location>
        <begin position="43"/>
        <end position="55"/>
    </location>
</feature>
<feature type="helix" evidence="23">
    <location>
        <begin position="59"/>
        <end position="62"/>
    </location>
</feature>
<feature type="strand" evidence="23">
    <location>
        <begin position="76"/>
        <end position="84"/>
    </location>
</feature>
<feature type="helix" evidence="23">
    <location>
        <begin position="86"/>
        <end position="95"/>
    </location>
</feature>
<feature type="helix" evidence="23">
    <location>
        <begin position="100"/>
        <end position="102"/>
    </location>
</feature>
<feature type="strand" evidence="23">
    <location>
        <begin position="103"/>
        <end position="109"/>
    </location>
</feature>
<feature type="helix" evidence="23">
    <location>
        <begin position="112"/>
        <end position="116"/>
    </location>
</feature>
<feature type="turn" evidence="23">
    <location>
        <begin position="117"/>
        <end position="119"/>
    </location>
</feature>
<feature type="helix" evidence="23">
    <location>
        <begin position="122"/>
        <end position="138"/>
    </location>
</feature>
<feature type="strand" evidence="23">
    <location>
        <begin position="143"/>
        <end position="149"/>
    </location>
</feature>
<feature type="helix" evidence="23">
    <location>
        <begin position="151"/>
        <end position="153"/>
    </location>
</feature>
<feature type="helix" evidence="23">
    <location>
        <begin position="154"/>
        <end position="157"/>
    </location>
</feature>
<feature type="helix" evidence="23">
    <location>
        <begin position="163"/>
        <end position="169"/>
    </location>
</feature>
<feature type="helix" evidence="23">
    <location>
        <begin position="171"/>
        <end position="176"/>
    </location>
</feature>
<feature type="strand" evidence="23">
    <location>
        <begin position="179"/>
        <end position="186"/>
    </location>
</feature>
<feature type="helix" evidence="23">
    <location>
        <begin position="188"/>
        <end position="190"/>
    </location>
</feature>
<feature type="helix" evidence="23">
    <location>
        <begin position="197"/>
        <end position="200"/>
    </location>
</feature>
<feature type="helix" evidence="23">
    <location>
        <begin position="202"/>
        <end position="214"/>
    </location>
</feature>
<feature type="strand" evidence="23">
    <location>
        <begin position="216"/>
        <end position="222"/>
    </location>
</feature>
<feature type="strand" evidence="23">
    <location>
        <begin position="234"/>
        <end position="240"/>
    </location>
</feature>
<feature type="strand" evidence="23">
    <location>
        <begin position="257"/>
        <end position="264"/>
    </location>
</feature>
<feature type="strand" evidence="23">
    <location>
        <begin position="267"/>
        <end position="271"/>
    </location>
</feature>
<keyword id="KW-0002">3D-structure</keyword>
<keyword id="KW-0963">Cytoplasm</keyword>
<keyword id="KW-0539">Nucleus</keyword>
<keyword id="KW-1185">Reference proteome</keyword>
<keyword id="KW-0819">tRNA processing</keyword>
<organism>
    <name type="scientific">Saccharomyces cerevisiae (strain ATCC 204508 / S288c)</name>
    <name type="common">Baker's yeast</name>
    <dbReference type="NCBI Taxonomy" id="559292"/>
    <lineage>
        <taxon>Eukaryota</taxon>
        <taxon>Fungi</taxon>
        <taxon>Dikarya</taxon>
        <taxon>Ascomycota</taxon>
        <taxon>Saccharomycotina</taxon>
        <taxon>Saccharomycetes</taxon>
        <taxon>Saccharomycetales</taxon>
        <taxon>Saccharomycetaceae</taxon>
        <taxon>Saccharomyces</taxon>
    </lineage>
</organism>
<dbReference type="EMBL" id="Z54141">
    <property type="protein sequence ID" value="CAA90830.1"/>
    <property type="molecule type" value="Genomic_DNA"/>
</dbReference>
<dbReference type="EMBL" id="AY557983">
    <property type="protein sequence ID" value="AAS56309.1"/>
    <property type="molecule type" value="Genomic_DNA"/>
</dbReference>
<dbReference type="EMBL" id="BK006946">
    <property type="protein sequence ID" value="DAA10213.1"/>
    <property type="molecule type" value="Genomic_DNA"/>
</dbReference>
<dbReference type="PIR" id="S59305">
    <property type="entry name" value="S59305"/>
</dbReference>
<dbReference type="RefSeq" id="NP_014043.1">
    <property type="nucleotide sequence ID" value="NM_001182823.1"/>
</dbReference>
<dbReference type="PDB" id="4A8J">
    <property type="method" value="X-ray"/>
    <property type="resolution" value="2.10 A"/>
    <property type="chains" value="C/F=1-273"/>
</dbReference>
<dbReference type="PDB" id="4EJS">
    <property type="method" value="X-ray"/>
    <property type="resolution" value="2.61 A"/>
    <property type="chains" value="C=1-273"/>
</dbReference>
<dbReference type="PDB" id="8ASV">
    <property type="method" value="EM"/>
    <property type="resolution" value="4.35 A"/>
    <property type="chains" value="F/I=1-273"/>
</dbReference>
<dbReference type="PDB" id="8AT6">
    <property type="method" value="EM"/>
    <property type="resolution" value="3.70 A"/>
    <property type="chains" value="C/F=1-273"/>
</dbReference>
<dbReference type="PDBsum" id="4A8J"/>
<dbReference type="PDBsum" id="4EJS"/>
<dbReference type="PDBsum" id="8ASV"/>
<dbReference type="PDBsum" id="8AT6"/>
<dbReference type="EMDB" id="EMD-15622"/>
<dbReference type="EMDB" id="EMD-15635"/>
<dbReference type="SMR" id="Q04868"/>
<dbReference type="BioGRID" id="35492">
    <property type="interactions" value="466"/>
</dbReference>
<dbReference type="ComplexPortal" id="CPX-779">
    <property type="entry name" value="Elongator holoenzyme complex"/>
</dbReference>
<dbReference type="DIP" id="DIP-1966N"/>
<dbReference type="FunCoup" id="Q04868">
    <property type="interactions" value="426"/>
</dbReference>
<dbReference type="IntAct" id="Q04868">
    <property type="interactions" value="9"/>
</dbReference>
<dbReference type="MINT" id="Q04868"/>
<dbReference type="STRING" id="4932.YMR312W"/>
<dbReference type="CarbonylDB" id="Q04868"/>
<dbReference type="iPTMnet" id="Q04868"/>
<dbReference type="PaxDb" id="4932-YMR312W"/>
<dbReference type="PeptideAtlas" id="Q04868"/>
<dbReference type="DNASU" id="855360"/>
<dbReference type="EnsemblFungi" id="YMR312W_mRNA">
    <property type="protein sequence ID" value="YMR312W"/>
    <property type="gene ID" value="YMR312W"/>
</dbReference>
<dbReference type="GeneID" id="855360"/>
<dbReference type="KEGG" id="sce:YMR312W"/>
<dbReference type="AGR" id="SGD:S000004929"/>
<dbReference type="SGD" id="S000004929">
    <property type="gene designation" value="ELP6"/>
</dbReference>
<dbReference type="VEuPathDB" id="FungiDB:YMR312W"/>
<dbReference type="eggNOG" id="ENOG502QSI3">
    <property type="taxonomic scope" value="Eukaryota"/>
</dbReference>
<dbReference type="HOGENOM" id="CLU_086730_0_0_1"/>
<dbReference type="InParanoid" id="Q04868"/>
<dbReference type="OMA" id="EYVYHIT"/>
<dbReference type="OrthoDB" id="9995306at2759"/>
<dbReference type="BioCyc" id="MetaCyc:G3O-32976-MONOMER"/>
<dbReference type="BioCyc" id="YEAST:G3O-32976-MONOMER"/>
<dbReference type="UniPathway" id="UPA00988"/>
<dbReference type="BioGRID-ORCS" id="855360">
    <property type="hits" value="0 hits in 10 CRISPR screens"/>
</dbReference>
<dbReference type="EvolutionaryTrace" id="Q04868"/>
<dbReference type="PRO" id="PR:Q04868"/>
<dbReference type="Proteomes" id="UP000002311">
    <property type="component" value="Chromosome XIII"/>
</dbReference>
<dbReference type="RNAct" id="Q04868">
    <property type="molecule type" value="protein"/>
</dbReference>
<dbReference type="GO" id="GO:0005737">
    <property type="term" value="C:cytoplasm"/>
    <property type="evidence" value="ECO:0007669"/>
    <property type="project" value="UniProtKB-SubCell"/>
</dbReference>
<dbReference type="GO" id="GO:0033588">
    <property type="term" value="C:elongator holoenzyme complex"/>
    <property type="evidence" value="ECO:0000314"/>
    <property type="project" value="UniProtKB"/>
</dbReference>
<dbReference type="GO" id="GO:0005654">
    <property type="term" value="C:nucleoplasm"/>
    <property type="evidence" value="ECO:0000304"/>
    <property type="project" value="Reactome"/>
</dbReference>
<dbReference type="GO" id="GO:0042802">
    <property type="term" value="F:identical protein binding"/>
    <property type="evidence" value="ECO:0000353"/>
    <property type="project" value="IntAct"/>
</dbReference>
<dbReference type="GO" id="GO:0032447">
    <property type="term" value="P:protein urmylation"/>
    <property type="evidence" value="ECO:0000315"/>
    <property type="project" value="SGD"/>
</dbReference>
<dbReference type="GO" id="GO:0006357">
    <property type="term" value="P:regulation of transcription by RNA polymerase II"/>
    <property type="evidence" value="ECO:0000315"/>
    <property type="project" value="SGD"/>
</dbReference>
<dbReference type="GO" id="GO:0006417">
    <property type="term" value="P:regulation of translation"/>
    <property type="evidence" value="ECO:0000303"/>
    <property type="project" value="ComplexPortal"/>
</dbReference>
<dbReference type="GO" id="GO:0002098">
    <property type="term" value="P:tRNA wobble uridine modification"/>
    <property type="evidence" value="ECO:0000315"/>
    <property type="project" value="SGD"/>
</dbReference>
<dbReference type="CDD" id="cd19479">
    <property type="entry name" value="Elp456"/>
    <property type="match status" value="1"/>
</dbReference>
<dbReference type="FunFam" id="3.40.50.300:FF:002617">
    <property type="entry name" value="Elongator complex protein 6"/>
    <property type="match status" value="1"/>
</dbReference>
<dbReference type="Gene3D" id="3.40.50.300">
    <property type="entry name" value="P-loop containing nucleotide triphosphate hydrolases"/>
    <property type="match status" value="1"/>
</dbReference>
<dbReference type="InterPro" id="IPR018627">
    <property type="entry name" value="ELP6"/>
</dbReference>
<dbReference type="InterPro" id="IPR027417">
    <property type="entry name" value="P-loop_NTPase"/>
</dbReference>
<dbReference type="PANTHER" id="PTHR16184">
    <property type="entry name" value="ELONGATOR COMPLEX PROTEIN 6"/>
    <property type="match status" value="1"/>
</dbReference>
<dbReference type="PANTHER" id="PTHR16184:SF6">
    <property type="entry name" value="ELONGATOR COMPLEX PROTEIN 6"/>
    <property type="match status" value="1"/>
</dbReference>
<sequence>MGSVQRQDLVLFSDQSVLPAHFFQDSNSHNLFFITHQSCTQPLWMINALVETHVLGSPSSLNESSSSMLPSSTRSHAVLASFIHEQNYFTNSLNKLKIPSNNYNVLDFLSDFIVNNIHNKPRDKILSDVLAKFSAAIQNNPTDTIVIIEQPELLLSLVSGLTCSELNNKFITPLLRQCKVLIIVSNSDIFNIDEYDASVHSSNLQNFYKSSFIKSMINLNLNPLKTGFAKDVTGSLHVCRGGAPIATSNTSLHVVENEYLYLNEKESTKLFYR</sequence>
<accession>Q04868</accession>
<accession>D6W0D9</accession>
<reference key="1">
    <citation type="journal article" date="1997" name="Nature">
        <title>The nucleotide sequence of Saccharomyces cerevisiae chromosome XIII.</title>
        <authorList>
            <person name="Bowman S."/>
            <person name="Churcher C.M."/>
            <person name="Badcock K."/>
            <person name="Brown D."/>
            <person name="Chillingworth T."/>
            <person name="Connor R."/>
            <person name="Dedman K."/>
            <person name="Devlin K."/>
            <person name="Gentles S."/>
            <person name="Hamlin N."/>
            <person name="Hunt S."/>
            <person name="Jagels K."/>
            <person name="Lye G."/>
            <person name="Moule S."/>
            <person name="Odell C."/>
            <person name="Pearson D."/>
            <person name="Rajandream M.A."/>
            <person name="Rice P."/>
            <person name="Skelton J."/>
            <person name="Walsh S.V."/>
            <person name="Whitehead S."/>
            <person name="Barrell B.G."/>
        </authorList>
    </citation>
    <scope>NUCLEOTIDE SEQUENCE [LARGE SCALE GENOMIC DNA]</scope>
    <source>
        <strain>ATCC 204508 / S288c</strain>
    </source>
</reference>
<reference key="2">
    <citation type="journal article" date="2014" name="G3 (Bethesda)">
        <title>The reference genome sequence of Saccharomyces cerevisiae: Then and now.</title>
        <authorList>
            <person name="Engel S.R."/>
            <person name="Dietrich F.S."/>
            <person name="Fisk D.G."/>
            <person name="Binkley G."/>
            <person name="Balakrishnan R."/>
            <person name="Costanzo M.C."/>
            <person name="Dwight S.S."/>
            <person name="Hitz B.C."/>
            <person name="Karra K."/>
            <person name="Nash R.S."/>
            <person name="Weng S."/>
            <person name="Wong E.D."/>
            <person name="Lloyd P."/>
            <person name="Skrzypek M.S."/>
            <person name="Miyasato S.R."/>
            <person name="Simison M."/>
            <person name="Cherry J.M."/>
        </authorList>
    </citation>
    <scope>GENOME REANNOTATION</scope>
    <source>
        <strain>ATCC 204508 / S288c</strain>
    </source>
</reference>
<reference key="3">
    <citation type="journal article" date="2007" name="Genome Res.">
        <title>Approaching a complete repository of sequence-verified protein-encoding clones for Saccharomyces cerevisiae.</title>
        <authorList>
            <person name="Hu Y."/>
            <person name="Rolfs A."/>
            <person name="Bhullar B."/>
            <person name="Murthy T.V.S."/>
            <person name="Zhu C."/>
            <person name="Berger M.F."/>
            <person name="Camargo A.A."/>
            <person name="Kelley F."/>
            <person name="McCarron S."/>
            <person name="Jepson D."/>
            <person name="Richardson A."/>
            <person name="Raphael J."/>
            <person name="Moreira D."/>
            <person name="Taycher E."/>
            <person name="Zuo D."/>
            <person name="Mohr S."/>
            <person name="Kane M.F."/>
            <person name="Williamson J."/>
            <person name="Simpson A.J.G."/>
            <person name="Bulyk M.L."/>
            <person name="Harlow E."/>
            <person name="Marsischky G."/>
            <person name="Kolodner R.D."/>
            <person name="LaBaer J."/>
        </authorList>
    </citation>
    <scope>NUCLEOTIDE SEQUENCE [GENOMIC DNA]</scope>
    <source>
        <strain>ATCC 204508 / S288c</strain>
    </source>
</reference>
<reference key="4">
    <citation type="journal article" date="1999" name="Mol. Cell">
        <title>Elongator, a multisubunit component of a novel RNA polymerase II holoenzyme for transcriptional elongation.</title>
        <authorList>
            <person name="Otero G."/>
            <person name="Fellows J."/>
            <person name="Li Y."/>
            <person name="de Bizemont T."/>
            <person name="Dirac A.M."/>
            <person name="Gustafsson C.M."/>
            <person name="Erdjument-Bromage H."/>
            <person name="Tempst P."/>
            <person name="Svejstrup J.Q."/>
        </authorList>
    </citation>
    <scope>SUBCELLULAR LOCATION</scope>
</reference>
<reference key="5">
    <citation type="journal article" date="2001" name="EMBO J.">
        <title>Saccharomyces cerevisiae Elongator mutations confer resistance to the Kluyveromyces lactis zymocin.</title>
        <authorList>
            <person name="Frohloff F."/>
            <person name="Fichtner L."/>
            <person name="Jablonowski D."/>
            <person name="Breunig K.D."/>
            <person name="Schaffrath R."/>
        </authorList>
    </citation>
    <scope>FUNCTION OF THE ELONGATOR COMPLEX IN ZYMOCIN SENSITIVITY</scope>
</reference>
<reference key="6">
    <citation type="journal article" date="2001" name="J. Biol. Chem.">
        <title>RNA polymerase II elongator holoenzyme is composed of two discrete subcomplexes.</title>
        <authorList>
            <person name="Winkler G.S."/>
            <person name="Petrakis T.G."/>
            <person name="Ethelberg S."/>
            <person name="Tokunaga M."/>
            <person name="Erdjument-Bromage H."/>
            <person name="Tempst P."/>
            <person name="Svejstrup J.Q."/>
        </authorList>
    </citation>
    <scope>IDENTIFICATION IN THE ELONGATOR COMPLEX</scope>
</reference>
<reference key="7">
    <citation type="journal article" date="2001" name="J. Biol. Chem.">
        <title>A multiprotein complex that interacts with RNA polymerase II elongator.</title>
        <authorList>
            <person name="Li Y."/>
            <person name="Takagi Y."/>
            <person name="Jiang Y."/>
            <person name="Tokunaga M."/>
            <person name="Erdjument-Bromage H."/>
            <person name="Tempst P."/>
            <person name="Kornberg R.D."/>
        </authorList>
    </citation>
    <scope>IDENTIFICATION IN THE ELONGATOR COMPLEX</scope>
    <scope>IDENTIFICATION BY MASS SPECTROMETRY</scope>
</reference>
<reference key="8">
    <citation type="journal article" date="2001" name="Mol. Cell. Biol.">
        <title>Characterization of a six-subunit holo-elongator complex required for the regulated expression of a group of genes in Saccharomyces cerevisiae.</title>
        <authorList>
            <person name="Krogan N.J."/>
            <person name="Greenblatt J.F."/>
        </authorList>
    </citation>
    <scope>IDENTIFICATION IN THE ELONGATOR COMPLEX</scope>
</reference>
<reference key="9">
    <citation type="journal article" date="2002" name="Proc. Natl. Acad. Sci. U.S.A.">
        <title>Elongator is a histone H3 and H4 acetyltransferase important for normal histone acetylation levels in vivo.</title>
        <authorList>
            <person name="Winkler G.S."/>
            <person name="Kristjuhan A."/>
            <person name="Erdjument-Bromage H."/>
            <person name="Tempst P."/>
            <person name="Svejstrup J.Q."/>
        </authorList>
    </citation>
    <scope>DISPUTED FUNCTION IN HISTONE ACETYLATION</scope>
</reference>
<reference key="10">
    <citation type="journal article" date="2003" name="Mol. Genet. Genomics">
        <title>Structural and functional analysis of the killer element pPin1-3 from Pichia inositovora.</title>
        <authorList>
            <person name="Klassen R."/>
            <person name="Meinhardt F."/>
        </authorList>
    </citation>
    <scope>FUNCTION OF THE ELONGATOR COMPLEX IN PICHIA INOSITOVORA TOXIN SENSITIVITY</scope>
</reference>
<reference key="11">
    <citation type="journal article" date="2005" name="Mol. Cell">
        <title>Elp1p, the yeast homolog of the FD disease syndrome protein, negatively regulates exocytosis independently of transcriptional elongation.</title>
        <authorList>
            <person name="Rahl P.B."/>
            <person name="Chen C.Z."/>
            <person name="Collins R.N."/>
        </authorList>
    </citation>
    <scope>SUBCELLULAR LOCATION</scope>
</reference>
<reference key="12">
    <citation type="journal article" date="2005" name="RNA">
        <title>An early step in wobble uridine tRNA modification requires the Elongator complex.</title>
        <authorList>
            <person name="Huang B."/>
            <person name="Johansson M.J.O."/>
            <person name="Bystroem A.S."/>
        </authorList>
    </citation>
    <scope>FUNCTION IN TRNA MODIFICATION</scope>
</reference>
<reference key="13">
    <citation type="journal article" date="2008" name="RNA">
        <title>A genome-wide screen identifies genes required for formation of the wobble nucleoside 5-methoxycarbonylmethyl-2-thiouridine in Saccharomyces cerevisiae.</title>
        <authorList>
            <person name="Huang B."/>
            <person name="Lu J."/>
            <person name="Bystroem A.S."/>
        </authorList>
    </citation>
    <scope>FUNCTION</scope>
</reference>
<reference key="14">
    <citation type="journal article" date="2018" name="Cell. Mol. Life Sci.">
        <title>Structural insights into the function of Elongator.</title>
        <authorList>
            <person name="Dalwadi U."/>
            <person name="Yip C.K."/>
        </authorList>
    </citation>
    <scope>REVIEW</scope>
</reference>
<reference key="15">
    <citation type="journal article" date="2019" name="Sci. Adv.">
        <title>Molecular basis of tRNA recognition by the Elongator complex.</title>
        <authorList>
            <person name="Dauden M.I."/>
            <person name="Jaciuk M."/>
            <person name="Weis F."/>
            <person name="Lin T.Y."/>
            <person name="Kleindienst C."/>
            <person name="Abbassi N.E.H."/>
            <person name="Khatter H."/>
            <person name="Krutyholowa R."/>
            <person name="Breunig K.D."/>
            <person name="Kosinski J."/>
            <person name="Mueller C.W."/>
            <person name="Glatt S."/>
        </authorList>
    </citation>
    <scope>SUBUNIT</scope>
</reference>
<reference evidence="22" key="16">
    <citation type="journal article" date="2012" name="J. Biol. Chem.">
        <title>Crystal structure of elongator subcomplex Elp4-6.</title>
        <authorList>
            <person name="Lin Z."/>
            <person name="Zhao W."/>
            <person name="Diao W."/>
            <person name="Xie X."/>
            <person name="Wang Z."/>
            <person name="Zhang J."/>
            <person name="Shen Y."/>
            <person name="Long J."/>
        </authorList>
    </citation>
    <scope>X-RAY CRYSTALLOGRAPHY (2.61 ANGSTROMS)</scope>
</reference>
<reference evidence="21" key="17">
    <citation type="journal article" date="2012" name="Nat. Struct. Mol. Biol.">
        <title>The Elongator subcomplex Elp456 is a hexameric RecA-like ATPase.</title>
        <authorList>
            <person name="Glatt S."/>
            <person name="Letoquart J."/>
            <person name="Faux C."/>
            <person name="Taylor N.M."/>
            <person name="Seraphin B."/>
            <person name="Muller C.W."/>
        </authorList>
    </citation>
    <scope>X-RAY CRYSTALLOGRAPHY (2.10 ANGSTROMS)</scope>
    <scope>SUBUNIT</scope>
</reference>
<reference key="18">
    <citation type="journal article" date="2017" name="EMBO Rep.">
        <title>Architecture of the yeast Elongator complex.</title>
        <authorList>
            <person name="Dauden M.I."/>
            <person name="Kosinski J."/>
            <person name="Kolaj-Robin O."/>
            <person name="Desfosses A."/>
            <person name="Ori A."/>
            <person name="Faux C."/>
            <person name="Hoffmann N.A."/>
            <person name="Onuma O.F."/>
            <person name="Breunig K.D."/>
            <person name="Beck M."/>
            <person name="Sachse C."/>
            <person name="Seraphin B."/>
            <person name="Glatt S."/>
            <person name="Mueller C.W."/>
        </authorList>
    </citation>
    <scope>STRUCTURE BY ELECTRON MICROSCOPY (3.3 ANGSTROMS)</scope>
    <scope>IDENTIFICATION IN THE ELONGATOR COMPLEX</scope>
</reference>
<reference key="19">
    <citation type="journal article" date="2017" name="EMBO Rep.">
        <title>Molecular architecture of the yeast Elongator complex reveals an unexpected asymmetric subunit arrangement.</title>
        <authorList>
            <person name="Setiaputra D.T."/>
            <person name="Cheng D.T."/>
            <person name="Lu S."/>
            <person name="Hansen J.M."/>
            <person name="Dalwadi U."/>
            <person name="Lam C.H."/>
            <person name="To J.L."/>
            <person name="Dong M.Q."/>
            <person name="Yip C.K."/>
        </authorList>
    </citation>
    <scope>STRUCTURE BY ELECTRON MICROSCOPY</scope>
    <scope>IDENTIFICATION IN THE ELONGATOR COMPLEX</scope>
</reference>
<name>ELP6_YEAST</name>